<dbReference type="EMBL" id="X67814">
    <property type="protein sequence ID" value="CAA48021.1"/>
    <property type="molecule type" value="Genomic_DNA"/>
</dbReference>
<dbReference type="RefSeq" id="XP_005705037.1">
    <property type="nucleotide sequence ID" value="XM_005704980.1"/>
</dbReference>
<dbReference type="RefSeq" id="YP_009051118.1">
    <property type="nucleotide sequence ID" value="NC_024665.1"/>
</dbReference>
<dbReference type="SMR" id="P35013"/>
<dbReference type="EnsemblPlants" id="EME28517">
    <property type="protein sequence ID" value="EME28517"/>
    <property type="gene ID" value="Gasu_40620"/>
</dbReference>
<dbReference type="GeneID" id="20005612"/>
<dbReference type="Gramene" id="EME28517">
    <property type="protein sequence ID" value="EME28517"/>
    <property type="gene ID" value="Gasu_40620"/>
</dbReference>
<dbReference type="KEGG" id="gsl:Gasu_40620"/>
<dbReference type="KEGG" id="gsl:JL72_p092"/>
<dbReference type="eggNOG" id="KOG0232">
    <property type="taxonomic scope" value="Eukaryota"/>
</dbReference>
<dbReference type="OMA" id="QPELMNE"/>
<dbReference type="OrthoDB" id="438052at2759"/>
<dbReference type="GO" id="GO:0009535">
    <property type="term" value="C:chloroplast thylakoid membrane"/>
    <property type="evidence" value="ECO:0007669"/>
    <property type="project" value="UniProtKB-SubCell"/>
</dbReference>
<dbReference type="GO" id="GO:0045259">
    <property type="term" value="C:proton-transporting ATP synthase complex"/>
    <property type="evidence" value="ECO:0007669"/>
    <property type="project" value="UniProtKB-KW"/>
</dbReference>
<dbReference type="GO" id="GO:0033177">
    <property type="term" value="C:proton-transporting two-sector ATPase complex, proton-transporting domain"/>
    <property type="evidence" value="ECO:0007669"/>
    <property type="project" value="InterPro"/>
</dbReference>
<dbReference type="GO" id="GO:0008289">
    <property type="term" value="F:lipid binding"/>
    <property type="evidence" value="ECO:0007669"/>
    <property type="project" value="UniProtKB-KW"/>
</dbReference>
<dbReference type="GO" id="GO:0046933">
    <property type="term" value="F:proton-transporting ATP synthase activity, rotational mechanism"/>
    <property type="evidence" value="ECO:0007669"/>
    <property type="project" value="UniProtKB-UniRule"/>
</dbReference>
<dbReference type="CDD" id="cd18183">
    <property type="entry name" value="ATP-synt_Fo_c_ATPH"/>
    <property type="match status" value="1"/>
</dbReference>
<dbReference type="FunFam" id="1.20.20.10:FF:000001">
    <property type="entry name" value="ATP synthase subunit c, chloroplastic"/>
    <property type="match status" value="1"/>
</dbReference>
<dbReference type="Gene3D" id="1.20.20.10">
    <property type="entry name" value="F1F0 ATP synthase subunit C"/>
    <property type="match status" value="1"/>
</dbReference>
<dbReference type="HAMAP" id="MF_01396">
    <property type="entry name" value="ATP_synth_c_bact"/>
    <property type="match status" value="1"/>
</dbReference>
<dbReference type="InterPro" id="IPR005953">
    <property type="entry name" value="ATP_synth_csu_bac/chlpt"/>
</dbReference>
<dbReference type="InterPro" id="IPR000454">
    <property type="entry name" value="ATP_synth_F0_csu"/>
</dbReference>
<dbReference type="InterPro" id="IPR020537">
    <property type="entry name" value="ATP_synth_F0_csu_DDCD_BS"/>
</dbReference>
<dbReference type="InterPro" id="IPR038662">
    <property type="entry name" value="ATP_synth_F0_csu_sf"/>
</dbReference>
<dbReference type="InterPro" id="IPR002379">
    <property type="entry name" value="ATPase_proteolipid_c-like_dom"/>
</dbReference>
<dbReference type="InterPro" id="IPR035921">
    <property type="entry name" value="F/V-ATP_Csub_sf"/>
</dbReference>
<dbReference type="NCBIfam" id="TIGR01260">
    <property type="entry name" value="ATP_synt_c"/>
    <property type="match status" value="1"/>
</dbReference>
<dbReference type="NCBIfam" id="NF005608">
    <property type="entry name" value="PRK07354.1"/>
    <property type="match status" value="1"/>
</dbReference>
<dbReference type="PANTHER" id="PTHR10031">
    <property type="entry name" value="ATP SYNTHASE LIPID-BINDING PROTEIN, MITOCHONDRIAL"/>
    <property type="match status" value="1"/>
</dbReference>
<dbReference type="PANTHER" id="PTHR10031:SF0">
    <property type="entry name" value="ATPASE PROTEIN 9"/>
    <property type="match status" value="1"/>
</dbReference>
<dbReference type="Pfam" id="PF00137">
    <property type="entry name" value="ATP-synt_C"/>
    <property type="match status" value="1"/>
</dbReference>
<dbReference type="PRINTS" id="PR00124">
    <property type="entry name" value="ATPASEC"/>
</dbReference>
<dbReference type="SUPFAM" id="SSF81333">
    <property type="entry name" value="F1F0 ATP synthase subunit C"/>
    <property type="match status" value="1"/>
</dbReference>
<dbReference type="PROSITE" id="PS00605">
    <property type="entry name" value="ATPASE_C"/>
    <property type="match status" value="1"/>
</dbReference>
<keyword id="KW-0066">ATP synthesis</keyword>
<keyword id="KW-0138">CF(0)</keyword>
<keyword id="KW-0150">Chloroplast</keyword>
<keyword id="KW-0375">Hydrogen ion transport</keyword>
<keyword id="KW-0406">Ion transport</keyword>
<keyword id="KW-0446">Lipid-binding</keyword>
<keyword id="KW-0472">Membrane</keyword>
<keyword id="KW-0934">Plastid</keyword>
<keyword id="KW-0793">Thylakoid</keyword>
<keyword id="KW-0812">Transmembrane</keyword>
<keyword id="KW-1133">Transmembrane helix</keyword>
<keyword id="KW-0813">Transport</keyword>
<feature type="chain" id="PRO_0000112188" description="ATP synthase subunit c, chloroplastic">
    <location>
        <begin position="1"/>
        <end position="83"/>
    </location>
</feature>
<feature type="transmembrane region" description="Helical" evidence="1">
    <location>
        <begin position="4"/>
        <end position="24"/>
    </location>
</feature>
<feature type="transmembrane region" description="Helical" evidence="1">
    <location>
        <begin position="57"/>
        <end position="77"/>
    </location>
</feature>
<feature type="site" description="Reversibly protonated during proton transport" evidence="1">
    <location>
        <position position="61"/>
    </location>
</feature>
<accession>P35013</accession>
<sequence>MDSIISAASVIAAGLAVGLAAIGPGIGQGTASAQAVEGIARQPEAEGKIRGTLLLSLAFMEALTIYGLVVALSLLFANPFINQ</sequence>
<evidence type="ECO:0000255" key="1">
    <source>
        <dbReference type="HAMAP-Rule" id="MF_01396"/>
    </source>
</evidence>
<protein>
    <recommendedName>
        <fullName evidence="1">ATP synthase subunit c, chloroplastic</fullName>
    </recommendedName>
    <alternativeName>
        <fullName evidence="1">ATP synthase F(0) sector subunit c</fullName>
    </alternativeName>
    <alternativeName>
        <fullName evidence="1">ATPase subunit III</fullName>
    </alternativeName>
    <alternativeName>
        <fullName evidence="1">F-type ATPase subunit c</fullName>
        <shortName evidence="1">F-ATPase subunit c</shortName>
    </alternativeName>
    <alternativeName>
        <fullName evidence="1">Lipid-binding protein</fullName>
    </alternativeName>
</protein>
<name>ATPH_GALSU</name>
<comment type="function">
    <text evidence="1">F(1)F(0) ATP synthase produces ATP from ADP in the presence of a proton or sodium gradient. F-type ATPases consist of two structural domains, F(1) containing the extramembraneous catalytic core and F(0) containing the membrane proton channel, linked together by a central stalk and a peripheral stalk. During catalysis, ATP synthesis in the catalytic domain of F(1) is coupled via a rotary mechanism of the central stalk subunits to proton translocation.</text>
</comment>
<comment type="function">
    <text evidence="1">Key component of the F(0) channel; it plays a direct role in translocation across the membrane. A homomeric c-ring of between 10-14 subunits forms the central stalk rotor element with the F(1) delta and epsilon subunits.</text>
</comment>
<comment type="subunit">
    <text evidence="1">F-type ATPases have 2 components, F(1) - the catalytic core - and F(0) - the membrane proton channel. F(1) has five subunits: alpha(3), beta(3), gamma(1), delta(1), epsilon(1). F(0) has four main subunits: a(1), b(1), b'(1) and c(10-14). The alpha and beta chains form an alternating ring which encloses part of the gamma chain. F(1) is attached to F(0) by a central stalk formed by the gamma and epsilon chains, while a peripheral stalk is formed by the delta, b and b' chains.</text>
</comment>
<comment type="subcellular location">
    <subcellularLocation>
        <location evidence="1">Plastid</location>
        <location evidence="1">Chloroplast thylakoid membrane</location>
        <topology evidence="1">Multi-pass membrane protein</topology>
    </subcellularLocation>
</comment>
<comment type="miscellaneous">
    <text>In plastids the F-type ATPase is also known as CF(1)CF(0).</text>
</comment>
<comment type="similarity">
    <text evidence="1">Belongs to the ATPase C chain family.</text>
</comment>
<proteinExistence type="inferred from homology"/>
<gene>
    <name evidence="1" type="primary">atpH</name>
</gene>
<geneLocation type="chloroplast"/>
<organism>
    <name type="scientific">Galdieria sulphuraria</name>
    <name type="common">Red alga</name>
    <dbReference type="NCBI Taxonomy" id="130081"/>
    <lineage>
        <taxon>Eukaryota</taxon>
        <taxon>Rhodophyta</taxon>
        <taxon>Bangiophyceae</taxon>
        <taxon>Galdieriales</taxon>
        <taxon>Galdieriaceae</taxon>
        <taxon>Galdieria</taxon>
    </lineage>
</organism>
<reference key="1">
    <citation type="journal article" date="1993" name="Plant Mol. Biol.">
        <title>Organization of plastid-encoded ATPase genes and flanking regions including homologues of infB and tsf in the thermophilic red alga Galdieria sulphuraria.</title>
        <authorList>
            <person name="Kostrzewa M."/>
            <person name="Zetsche K."/>
        </authorList>
    </citation>
    <scope>NUCLEOTIDE SEQUENCE [GENOMIC DNA]</scope>
    <source>
        <strain>14-1-1 / Isolate 107.79/Goettingen</strain>
    </source>
</reference>